<feature type="chain" id="PRO_1000098577" description="Threonine--tRNA ligase">
    <location>
        <begin position="1"/>
        <end position="612"/>
    </location>
</feature>
<feature type="region of interest" description="Catalytic" evidence="1">
    <location>
        <begin position="218"/>
        <end position="509"/>
    </location>
</feature>
<feature type="binding site" evidence="1">
    <location>
        <position position="310"/>
    </location>
    <ligand>
        <name>Zn(2+)</name>
        <dbReference type="ChEBI" id="CHEBI:29105"/>
    </ligand>
</feature>
<feature type="binding site" evidence="1">
    <location>
        <position position="361"/>
    </location>
    <ligand>
        <name>Zn(2+)</name>
        <dbReference type="ChEBI" id="CHEBI:29105"/>
    </ligand>
</feature>
<feature type="binding site" evidence="1">
    <location>
        <position position="486"/>
    </location>
    <ligand>
        <name>Zn(2+)</name>
        <dbReference type="ChEBI" id="CHEBI:29105"/>
    </ligand>
</feature>
<dbReference type="EC" id="6.1.1.3" evidence="1"/>
<dbReference type="EMBL" id="CP001217">
    <property type="protein sequence ID" value="ACJ07283.1"/>
    <property type="molecule type" value="Genomic_DNA"/>
</dbReference>
<dbReference type="SMR" id="B6JPM2"/>
<dbReference type="KEGG" id="hpp:HPP12_0123"/>
<dbReference type="HOGENOM" id="CLU_008554_0_1_7"/>
<dbReference type="Proteomes" id="UP000008198">
    <property type="component" value="Chromosome"/>
</dbReference>
<dbReference type="GO" id="GO:0005829">
    <property type="term" value="C:cytosol"/>
    <property type="evidence" value="ECO:0007669"/>
    <property type="project" value="TreeGrafter"/>
</dbReference>
<dbReference type="GO" id="GO:0005524">
    <property type="term" value="F:ATP binding"/>
    <property type="evidence" value="ECO:0007669"/>
    <property type="project" value="UniProtKB-UniRule"/>
</dbReference>
<dbReference type="GO" id="GO:0046872">
    <property type="term" value="F:metal ion binding"/>
    <property type="evidence" value="ECO:0007669"/>
    <property type="project" value="UniProtKB-KW"/>
</dbReference>
<dbReference type="GO" id="GO:0004829">
    <property type="term" value="F:threonine-tRNA ligase activity"/>
    <property type="evidence" value="ECO:0007669"/>
    <property type="project" value="UniProtKB-UniRule"/>
</dbReference>
<dbReference type="GO" id="GO:0000049">
    <property type="term" value="F:tRNA binding"/>
    <property type="evidence" value="ECO:0007669"/>
    <property type="project" value="UniProtKB-KW"/>
</dbReference>
<dbReference type="GO" id="GO:0006435">
    <property type="term" value="P:threonyl-tRNA aminoacylation"/>
    <property type="evidence" value="ECO:0007669"/>
    <property type="project" value="UniProtKB-UniRule"/>
</dbReference>
<dbReference type="CDD" id="cd00860">
    <property type="entry name" value="ThrRS_anticodon"/>
    <property type="match status" value="1"/>
</dbReference>
<dbReference type="CDD" id="cd00771">
    <property type="entry name" value="ThrRS_core"/>
    <property type="match status" value="1"/>
</dbReference>
<dbReference type="FunFam" id="3.30.930.10:FF:000019">
    <property type="entry name" value="Threonine--tRNA ligase"/>
    <property type="match status" value="1"/>
</dbReference>
<dbReference type="FunFam" id="3.30.980.10:FF:000005">
    <property type="entry name" value="Threonyl-tRNA synthetase, mitochondrial"/>
    <property type="match status" value="1"/>
</dbReference>
<dbReference type="Gene3D" id="3.30.54.20">
    <property type="match status" value="1"/>
</dbReference>
<dbReference type="Gene3D" id="3.40.50.800">
    <property type="entry name" value="Anticodon-binding domain"/>
    <property type="match status" value="1"/>
</dbReference>
<dbReference type="Gene3D" id="3.30.930.10">
    <property type="entry name" value="Bira Bifunctional Protein, Domain 2"/>
    <property type="match status" value="1"/>
</dbReference>
<dbReference type="Gene3D" id="3.30.980.10">
    <property type="entry name" value="Threonyl-trna Synthetase, Chain A, domain 2"/>
    <property type="match status" value="1"/>
</dbReference>
<dbReference type="HAMAP" id="MF_00184">
    <property type="entry name" value="Thr_tRNA_synth"/>
    <property type="match status" value="1"/>
</dbReference>
<dbReference type="InterPro" id="IPR002314">
    <property type="entry name" value="aa-tRNA-synt_IIb"/>
</dbReference>
<dbReference type="InterPro" id="IPR006195">
    <property type="entry name" value="aa-tRNA-synth_II"/>
</dbReference>
<dbReference type="InterPro" id="IPR045864">
    <property type="entry name" value="aa-tRNA-synth_II/BPL/LPL"/>
</dbReference>
<dbReference type="InterPro" id="IPR004154">
    <property type="entry name" value="Anticodon-bd"/>
</dbReference>
<dbReference type="InterPro" id="IPR036621">
    <property type="entry name" value="Anticodon-bd_dom_sf"/>
</dbReference>
<dbReference type="InterPro" id="IPR002320">
    <property type="entry name" value="Thr-tRNA-ligase_IIa"/>
</dbReference>
<dbReference type="InterPro" id="IPR018163">
    <property type="entry name" value="Thr/Ala-tRNA-synth_IIc_edit"/>
</dbReference>
<dbReference type="InterPro" id="IPR047246">
    <property type="entry name" value="ThrRS_anticodon"/>
</dbReference>
<dbReference type="InterPro" id="IPR033728">
    <property type="entry name" value="ThrRS_core"/>
</dbReference>
<dbReference type="InterPro" id="IPR012947">
    <property type="entry name" value="tRNA_SAD"/>
</dbReference>
<dbReference type="NCBIfam" id="TIGR00418">
    <property type="entry name" value="thrS"/>
    <property type="match status" value="1"/>
</dbReference>
<dbReference type="PANTHER" id="PTHR11451:SF44">
    <property type="entry name" value="THREONINE--TRNA LIGASE, CHLOROPLASTIC_MITOCHONDRIAL 2"/>
    <property type="match status" value="1"/>
</dbReference>
<dbReference type="PANTHER" id="PTHR11451">
    <property type="entry name" value="THREONINE-TRNA LIGASE"/>
    <property type="match status" value="1"/>
</dbReference>
<dbReference type="Pfam" id="PF03129">
    <property type="entry name" value="HGTP_anticodon"/>
    <property type="match status" value="1"/>
</dbReference>
<dbReference type="Pfam" id="PF00587">
    <property type="entry name" value="tRNA-synt_2b"/>
    <property type="match status" value="1"/>
</dbReference>
<dbReference type="Pfam" id="PF07973">
    <property type="entry name" value="tRNA_SAD"/>
    <property type="match status" value="1"/>
</dbReference>
<dbReference type="PRINTS" id="PR01047">
    <property type="entry name" value="TRNASYNTHTHR"/>
</dbReference>
<dbReference type="SMART" id="SM00863">
    <property type="entry name" value="tRNA_SAD"/>
    <property type="match status" value="1"/>
</dbReference>
<dbReference type="SUPFAM" id="SSF52954">
    <property type="entry name" value="Class II aaRS ABD-related"/>
    <property type="match status" value="1"/>
</dbReference>
<dbReference type="SUPFAM" id="SSF55681">
    <property type="entry name" value="Class II aaRS and biotin synthetases"/>
    <property type="match status" value="1"/>
</dbReference>
<dbReference type="SUPFAM" id="SSF55186">
    <property type="entry name" value="ThrRS/AlaRS common domain"/>
    <property type="match status" value="1"/>
</dbReference>
<dbReference type="PROSITE" id="PS50862">
    <property type="entry name" value="AA_TRNA_LIGASE_II"/>
    <property type="match status" value="1"/>
</dbReference>
<name>SYT_HELP2</name>
<comment type="function">
    <text evidence="1">Catalyzes the attachment of threonine to tRNA(Thr) in a two-step reaction: L-threonine is first activated by ATP to form Thr-AMP and then transferred to the acceptor end of tRNA(Thr). Also edits incorrectly charged L-seryl-tRNA(Thr).</text>
</comment>
<comment type="catalytic activity">
    <reaction evidence="1">
        <text>tRNA(Thr) + L-threonine + ATP = L-threonyl-tRNA(Thr) + AMP + diphosphate + H(+)</text>
        <dbReference type="Rhea" id="RHEA:24624"/>
        <dbReference type="Rhea" id="RHEA-COMP:9670"/>
        <dbReference type="Rhea" id="RHEA-COMP:9704"/>
        <dbReference type="ChEBI" id="CHEBI:15378"/>
        <dbReference type="ChEBI" id="CHEBI:30616"/>
        <dbReference type="ChEBI" id="CHEBI:33019"/>
        <dbReference type="ChEBI" id="CHEBI:57926"/>
        <dbReference type="ChEBI" id="CHEBI:78442"/>
        <dbReference type="ChEBI" id="CHEBI:78534"/>
        <dbReference type="ChEBI" id="CHEBI:456215"/>
        <dbReference type="EC" id="6.1.1.3"/>
    </reaction>
</comment>
<comment type="cofactor">
    <cofactor evidence="1">
        <name>Zn(2+)</name>
        <dbReference type="ChEBI" id="CHEBI:29105"/>
    </cofactor>
    <text evidence="1">Binds 1 zinc ion per subunit.</text>
</comment>
<comment type="subunit">
    <text evidence="1">Homodimer.</text>
</comment>
<comment type="subcellular location">
    <subcellularLocation>
        <location evidence="1">Cytoplasm</location>
    </subcellularLocation>
</comment>
<comment type="similarity">
    <text evidence="1">Belongs to the class-II aminoacyl-tRNA synthetase family.</text>
</comment>
<accession>B6JPM2</accession>
<gene>
    <name evidence="1" type="primary">thrS</name>
    <name type="ordered locus">HPP12_0123</name>
</gene>
<protein>
    <recommendedName>
        <fullName evidence="1">Threonine--tRNA ligase</fullName>
        <ecNumber evidence="1">6.1.1.3</ecNumber>
    </recommendedName>
    <alternativeName>
        <fullName evidence="1">Threonyl-tRNA synthetase</fullName>
        <shortName evidence="1">ThrRS</shortName>
    </alternativeName>
</protein>
<proteinExistence type="inferred from homology"/>
<evidence type="ECO:0000255" key="1">
    <source>
        <dbReference type="HAMAP-Rule" id="MF_00184"/>
    </source>
</evidence>
<organism>
    <name type="scientific">Helicobacter pylori (strain P12)</name>
    <dbReference type="NCBI Taxonomy" id="570508"/>
    <lineage>
        <taxon>Bacteria</taxon>
        <taxon>Pseudomonadati</taxon>
        <taxon>Campylobacterota</taxon>
        <taxon>Epsilonproteobacteria</taxon>
        <taxon>Campylobacterales</taxon>
        <taxon>Helicobacteraceae</taxon>
        <taxon>Helicobacter</taxon>
    </lineage>
</organism>
<reference key="1">
    <citation type="submission" date="2008-10" db="EMBL/GenBank/DDBJ databases">
        <title>The complete genome sequence of Helicobacter pylori strain P12.</title>
        <authorList>
            <person name="Fischer W."/>
            <person name="Windhager L."/>
            <person name="Karnholz A."/>
            <person name="Zeiller M."/>
            <person name="Zimmer R."/>
            <person name="Haas R."/>
        </authorList>
    </citation>
    <scope>NUCLEOTIDE SEQUENCE [LARGE SCALE GENOMIC DNA]</scope>
    <source>
        <strain>P12</strain>
    </source>
</reference>
<keyword id="KW-0030">Aminoacyl-tRNA synthetase</keyword>
<keyword id="KW-0067">ATP-binding</keyword>
<keyword id="KW-0963">Cytoplasm</keyword>
<keyword id="KW-0436">Ligase</keyword>
<keyword id="KW-0479">Metal-binding</keyword>
<keyword id="KW-0547">Nucleotide-binding</keyword>
<keyword id="KW-0648">Protein biosynthesis</keyword>
<keyword id="KW-0694">RNA-binding</keyword>
<keyword id="KW-0820">tRNA-binding</keyword>
<keyword id="KW-0862">Zinc</keyword>
<sequence>MSAELIAVYKDEQIIDLESAKVLGLSDGIKALNGTEPIYFDDSPLALEVIRHSCAHLLAQSLKALYPDAKFFVGPVVEEGFYYDFKTASKISEEDLPKIEAKMKEFAKLKLAITKETLTREQALERFKGDELKHAVMSKISGDAFGVYQQGEFEDLCKGPHLPNTRFLNHFKLTKLAGAYLGGDENNEMLIRIYGIAFATKEGLKDYLFQIEEAKKRDHRKLGVELGLFSFDDEIGAGLPLWLPKGARLRKRIEDLLSQALLLRGYEPVKGPEILKSDVWKISGHYDNYKENMYFTTIDEQEYGIKPMNCVGHIKVYQSALHSYRDLPLRFYEYGVVHRHEKSGVLHGLLRVREFTQDDAHIFCSFEQIQSEVSAILDFTHKIMQAFDFSYEMELSTRPAKSIGDDEVWEKATSALKEALKEHRIDYKIDEGGGAFYGPKIDIKITDALKRKWQCGTIQVDMNLPERFKLAFTNERNHAEQPVMIHRAILGSFERFIAILSEHFGGNFPFFVAPTQIALIPINEEHHVFALKLKEVLKKRDIFVEVLDKNDSLNKKVRLAEKQKIPMILVLGNEEVETEILSIRDREKQAQYKMPLKEFLNMVESKMQEVSF</sequence>